<proteinExistence type="evidence at protein level"/>
<feature type="chain" id="PRO_0000051620" description="Poly(A) polymerase pla1">
    <location>
        <begin position="1"/>
        <end position="566"/>
    </location>
</feature>
<feature type="region of interest" description="Disordered" evidence="2">
    <location>
        <begin position="437"/>
        <end position="463"/>
    </location>
</feature>
<feature type="region of interest" description="Disordered" evidence="2">
    <location>
        <begin position="530"/>
        <end position="566"/>
    </location>
</feature>
<feature type="binding site" evidence="1">
    <location>
        <begin position="86"/>
        <end position="88"/>
    </location>
    <ligand>
        <name>ATP</name>
        <dbReference type="ChEBI" id="CHEBI:30616"/>
    </ligand>
</feature>
<feature type="binding site" evidence="1">
    <location>
        <begin position="99"/>
        <end position="101"/>
    </location>
    <ligand>
        <name>ATP</name>
        <dbReference type="ChEBI" id="CHEBI:30616"/>
    </ligand>
</feature>
<feature type="binding site" evidence="1">
    <location>
        <position position="99"/>
    </location>
    <ligand>
        <name>Mg(2+)</name>
        <dbReference type="ChEBI" id="CHEBI:18420"/>
        <label>1</label>
        <note>catalytic</note>
    </ligand>
</feature>
<feature type="binding site" evidence="1">
    <location>
        <position position="99"/>
    </location>
    <ligand>
        <name>Mg(2+)</name>
        <dbReference type="ChEBI" id="CHEBI:18420"/>
        <label>2</label>
        <note>catalytic</note>
    </ligand>
</feature>
<feature type="binding site" evidence="1">
    <location>
        <position position="101"/>
    </location>
    <ligand>
        <name>Mg(2+)</name>
        <dbReference type="ChEBI" id="CHEBI:18420"/>
        <label>1</label>
        <note>catalytic</note>
    </ligand>
</feature>
<feature type="binding site" evidence="1">
    <location>
        <position position="101"/>
    </location>
    <ligand>
        <name>Mg(2+)</name>
        <dbReference type="ChEBI" id="CHEBI:18420"/>
        <label>2</label>
        <note>catalytic</note>
    </ligand>
</feature>
<feature type="binding site" evidence="1">
    <location>
        <position position="153"/>
    </location>
    <ligand>
        <name>ATP</name>
        <dbReference type="ChEBI" id="CHEBI:30616"/>
    </ligand>
</feature>
<feature type="binding site" evidence="1">
    <location>
        <position position="153"/>
    </location>
    <ligand>
        <name>Mg(2+)</name>
        <dbReference type="ChEBI" id="CHEBI:18420"/>
        <label>2</label>
        <note>catalytic</note>
    </ligand>
</feature>
<feature type="binding site" evidence="1">
    <location>
        <position position="214"/>
    </location>
    <ligand>
        <name>ATP</name>
        <dbReference type="ChEBI" id="CHEBI:30616"/>
    </ligand>
</feature>
<feature type="binding site" evidence="1">
    <location>
        <position position="223"/>
    </location>
    <ligand>
        <name>ATP</name>
        <dbReference type="ChEBI" id="CHEBI:30616"/>
    </ligand>
</feature>
<feature type="binding site" evidence="1">
    <location>
        <begin position="232"/>
        <end position="233"/>
    </location>
    <ligand>
        <name>ATP</name>
        <dbReference type="ChEBI" id="CHEBI:30616"/>
    </ligand>
</feature>
<feature type="site" description="Interaction with RNA" evidence="1">
    <location>
        <position position="144"/>
    </location>
</feature>
<feature type="site" description="Interaction with RNA" evidence="1">
    <location>
        <position position="313"/>
    </location>
</feature>
<feature type="site" description="Interaction with RNA" evidence="1">
    <location>
        <position position="314"/>
    </location>
</feature>
<feature type="site" description="Interaction with RNA" evidence="1">
    <location>
        <position position="385"/>
    </location>
</feature>
<feature type="site" description="Interaction with RNA" evidence="1">
    <location>
        <position position="500"/>
    </location>
</feature>
<feature type="strand" evidence="8">
    <location>
        <begin position="7"/>
        <end position="9"/>
    </location>
</feature>
<feature type="helix" evidence="8">
    <location>
        <begin position="19"/>
        <end position="34"/>
    </location>
</feature>
<feature type="helix" evidence="8">
    <location>
        <begin position="41"/>
        <end position="68"/>
    </location>
</feature>
<feature type="helix" evidence="8">
    <location>
        <begin position="73"/>
        <end position="78"/>
    </location>
</feature>
<feature type="strand" evidence="8">
    <location>
        <begin position="82"/>
        <end position="86"/>
    </location>
</feature>
<feature type="helix" evidence="8">
    <location>
        <begin position="87"/>
        <end position="91"/>
    </location>
</feature>
<feature type="strand" evidence="8">
    <location>
        <begin position="100"/>
        <end position="106"/>
    </location>
</feature>
<feature type="helix" evidence="8">
    <location>
        <begin position="112"/>
        <end position="117"/>
    </location>
</feature>
<feature type="helix" evidence="8">
    <location>
        <begin position="119"/>
        <end position="124"/>
    </location>
</feature>
<feature type="strand" evidence="8">
    <location>
        <begin position="129"/>
        <end position="135"/>
    </location>
</feature>
<feature type="strand" evidence="8">
    <location>
        <begin position="138"/>
        <end position="140"/>
    </location>
</feature>
<feature type="strand" evidence="8">
    <location>
        <begin position="142"/>
        <end position="147"/>
    </location>
</feature>
<feature type="strand" evidence="8">
    <location>
        <begin position="150"/>
        <end position="158"/>
    </location>
</feature>
<feature type="strand" evidence="8">
    <location>
        <begin position="160"/>
        <end position="162"/>
    </location>
</feature>
<feature type="helix" evidence="8">
    <location>
        <begin position="173"/>
        <end position="176"/>
    </location>
</feature>
<feature type="helix" evidence="8">
    <location>
        <begin position="181"/>
        <end position="199"/>
    </location>
</feature>
<feature type="helix" evidence="8">
    <location>
        <begin position="203"/>
        <end position="219"/>
    </location>
</feature>
<feature type="helix" evidence="8">
    <location>
        <begin position="225"/>
        <end position="227"/>
    </location>
</feature>
<feature type="helix" evidence="8">
    <location>
        <begin position="232"/>
        <end position="245"/>
    </location>
</feature>
<feature type="helix" evidence="8">
    <location>
        <begin position="251"/>
        <end position="263"/>
    </location>
</feature>
<feature type="turn" evidence="8">
    <location>
        <begin position="288"/>
        <end position="290"/>
    </location>
</feature>
<feature type="helix" evidence="8">
    <location>
        <begin position="292"/>
        <end position="295"/>
    </location>
</feature>
<feature type="strand" evidence="8">
    <location>
        <begin position="304"/>
        <end position="307"/>
    </location>
</feature>
<feature type="turn" evidence="8">
    <location>
        <begin position="311"/>
        <end position="314"/>
    </location>
</feature>
<feature type="helix" evidence="8">
    <location>
        <begin position="317"/>
        <end position="338"/>
    </location>
</feature>
<feature type="helix" evidence="8">
    <location>
        <begin position="344"/>
        <end position="348"/>
    </location>
</feature>
<feature type="helix" evidence="8">
    <location>
        <begin position="353"/>
        <end position="356"/>
    </location>
</feature>
<feature type="strand" evidence="8">
    <location>
        <begin position="358"/>
        <end position="369"/>
    </location>
</feature>
<feature type="helix" evidence="8">
    <location>
        <begin position="370"/>
        <end position="382"/>
    </location>
</feature>
<feature type="helix" evidence="8">
    <location>
        <begin position="384"/>
        <end position="393"/>
    </location>
</feature>
<feature type="strand" evidence="8">
    <location>
        <begin position="397"/>
        <end position="402"/>
    </location>
</feature>
<feature type="strand" evidence="8">
    <location>
        <begin position="407"/>
        <end position="415"/>
    </location>
</feature>
<feature type="helix" evidence="8">
    <location>
        <begin position="416"/>
        <end position="423"/>
    </location>
</feature>
<feature type="strand" evidence="8">
    <location>
        <begin position="432"/>
        <end position="435"/>
    </location>
</feature>
<feature type="helix" evidence="8">
    <location>
        <begin position="437"/>
        <end position="446"/>
    </location>
</feature>
<feature type="strand" evidence="8">
    <location>
        <begin position="468"/>
        <end position="481"/>
    </location>
</feature>
<feature type="strand" evidence="7">
    <location>
        <begin position="491"/>
        <end position="493"/>
    </location>
</feature>
<feature type="helix" evidence="8">
    <location>
        <begin position="495"/>
        <end position="505"/>
    </location>
</feature>
<feature type="turn" evidence="8">
    <location>
        <begin position="513"/>
        <end position="515"/>
    </location>
</feature>
<feature type="strand" evidence="8">
    <location>
        <begin position="516"/>
        <end position="524"/>
    </location>
</feature>
<feature type="helix" evidence="8">
    <location>
        <begin position="525"/>
        <end position="527"/>
    </location>
</feature>
<feature type="helix" evidence="8">
    <location>
        <begin position="530"/>
        <end position="532"/>
    </location>
</feature>
<accession>Q10295</accession>
<accession>Q9UU09</accession>
<evidence type="ECO:0000250" key="1"/>
<evidence type="ECO:0000256" key="2">
    <source>
        <dbReference type="SAM" id="MobiDB-lite"/>
    </source>
</evidence>
<evidence type="ECO:0000269" key="3">
    <source>
    </source>
</evidence>
<evidence type="ECO:0000269" key="4">
    <source>
    </source>
</evidence>
<evidence type="ECO:0000305" key="5"/>
<evidence type="ECO:0000305" key="6">
    <source>
    </source>
</evidence>
<evidence type="ECO:0007829" key="7">
    <source>
        <dbReference type="PDB" id="7Q72"/>
    </source>
</evidence>
<evidence type="ECO:0007829" key="8">
    <source>
        <dbReference type="PDB" id="7Q73"/>
    </source>
</evidence>
<dbReference type="EC" id="2.7.7.19" evidence="4"/>
<dbReference type="EMBL" id="X79705">
    <property type="protein sequence ID" value="CAA56141.1"/>
    <property type="molecule type" value="mRNA"/>
</dbReference>
<dbReference type="EMBL" id="CU329671">
    <property type="protein sequence ID" value="CAA22808.1"/>
    <property type="molecule type" value="Genomic_DNA"/>
</dbReference>
<dbReference type="EMBL" id="AB027883">
    <property type="protein sequence ID" value="BAA87187.1"/>
    <property type="molecule type" value="Genomic_DNA"/>
</dbReference>
<dbReference type="PIR" id="JC6058">
    <property type="entry name" value="JC6058"/>
</dbReference>
<dbReference type="RefSeq" id="NP_595362.1">
    <property type="nucleotide sequence ID" value="NM_001021270.2"/>
</dbReference>
<dbReference type="PDB" id="7Q72">
    <property type="method" value="X-ray"/>
    <property type="resolution" value="2.80 A"/>
    <property type="chains" value="A/B=1-566"/>
</dbReference>
<dbReference type="PDB" id="7Q73">
    <property type="method" value="X-ray"/>
    <property type="resolution" value="1.90 A"/>
    <property type="chains" value="A=1-566"/>
</dbReference>
<dbReference type="PDB" id="7Q74">
    <property type="method" value="X-ray"/>
    <property type="resolution" value="2.60 A"/>
    <property type="chains" value="A/B=1-542"/>
</dbReference>
<dbReference type="PDBsum" id="7Q72"/>
<dbReference type="PDBsum" id="7Q73"/>
<dbReference type="PDBsum" id="7Q74"/>
<dbReference type="SASBDB" id="Q10295"/>
<dbReference type="SMR" id="Q10295"/>
<dbReference type="BioGRID" id="277614">
    <property type="interactions" value="14"/>
</dbReference>
<dbReference type="FunCoup" id="Q10295">
    <property type="interactions" value="865"/>
</dbReference>
<dbReference type="IntAct" id="Q10295">
    <property type="interactions" value="5"/>
</dbReference>
<dbReference type="MINT" id="Q10295"/>
<dbReference type="STRING" id="284812.Q10295"/>
<dbReference type="iPTMnet" id="Q10295"/>
<dbReference type="PaxDb" id="4896-SPBC646.04.1"/>
<dbReference type="EnsemblFungi" id="SPBC646.04.1">
    <property type="protein sequence ID" value="SPBC646.04.1:pep"/>
    <property type="gene ID" value="SPBC646.04"/>
</dbReference>
<dbReference type="GeneID" id="2541099"/>
<dbReference type="KEGG" id="spo:2541099"/>
<dbReference type="PomBase" id="SPBC646.04">
    <property type="gene designation" value="pla1"/>
</dbReference>
<dbReference type="VEuPathDB" id="FungiDB:SPBC646.04"/>
<dbReference type="eggNOG" id="KOG2245">
    <property type="taxonomic scope" value="Eukaryota"/>
</dbReference>
<dbReference type="HOGENOM" id="CLU_011511_4_1_1"/>
<dbReference type="InParanoid" id="Q10295"/>
<dbReference type="OMA" id="PAYPAMC"/>
<dbReference type="PhylomeDB" id="Q10295"/>
<dbReference type="PRO" id="PR:Q10295"/>
<dbReference type="Proteomes" id="UP000002485">
    <property type="component" value="Chromosome II"/>
</dbReference>
<dbReference type="GO" id="GO:0071920">
    <property type="term" value="C:cleavage body"/>
    <property type="evidence" value="ECO:0000314"/>
    <property type="project" value="PomBase"/>
</dbReference>
<dbReference type="GO" id="GO:0005829">
    <property type="term" value="C:cytosol"/>
    <property type="evidence" value="ECO:0000314"/>
    <property type="project" value="PomBase"/>
</dbReference>
<dbReference type="GO" id="GO:0033620">
    <property type="term" value="C:Mei2 nuclear dot complex"/>
    <property type="evidence" value="ECO:0000314"/>
    <property type="project" value="PomBase"/>
</dbReference>
<dbReference type="GO" id="GO:0005847">
    <property type="term" value="C:mRNA cleavage and polyadenylation specificity factor complex"/>
    <property type="evidence" value="ECO:0000316"/>
    <property type="project" value="PomBase"/>
</dbReference>
<dbReference type="GO" id="GO:1990251">
    <property type="term" value="C:nuclear exosome focus"/>
    <property type="evidence" value="ECO:0000314"/>
    <property type="project" value="PomBase"/>
</dbReference>
<dbReference type="GO" id="GO:0005654">
    <property type="term" value="C:nucleoplasm"/>
    <property type="evidence" value="ECO:0000314"/>
    <property type="project" value="PomBase"/>
</dbReference>
<dbReference type="GO" id="GO:0005634">
    <property type="term" value="C:nucleus"/>
    <property type="evidence" value="ECO:0000314"/>
    <property type="project" value="PomBase"/>
</dbReference>
<dbReference type="GO" id="GO:0005524">
    <property type="term" value="F:ATP binding"/>
    <property type="evidence" value="ECO:0007669"/>
    <property type="project" value="UniProtKB-KW"/>
</dbReference>
<dbReference type="GO" id="GO:0046872">
    <property type="term" value="F:metal ion binding"/>
    <property type="evidence" value="ECO:0007669"/>
    <property type="project" value="UniProtKB-KW"/>
</dbReference>
<dbReference type="GO" id="GO:1990817">
    <property type="term" value="F:poly(A) RNA polymerase activity"/>
    <property type="evidence" value="ECO:0000314"/>
    <property type="project" value="PomBase"/>
</dbReference>
<dbReference type="GO" id="GO:0003723">
    <property type="term" value="F:RNA binding"/>
    <property type="evidence" value="ECO:0007669"/>
    <property type="project" value="UniProtKB-KW"/>
</dbReference>
<dbReference type="GO" id="GO:0180010">
    <property type="term" value="P:co-transcriptional mRNA 3'-end processing, cleavage and polyadenylation pathway"/>
    <property type="evidence" value="ECO:0000316"/>
    <property type="project" value="PomBase"/>
</dbReference>
<dbReference type="GO" id="GO:0033621">
    <property type="term" value="P:nuclear mRNA surveillance of meiosis-specific transcripts"/>
    <property type="evidence" value="ECO:0000315"/>
    <property type="project" value="PomBase"/>
</dbReference>
<dbReference type="CDD" id="cd05402">
    <property type="entry name" value="NT_PAP_TUTase"/>
    <property type="match status" value="1"/>
</dbReference>
<dbReference type="FunFam" id="3.30.70.590:FF:000003">
    <property type="entry name" value="Poly(A) polymerase"/>
    <property type="match status" value="1"/>
</dbReference>
<dbReference type="FunFam" id="3.30.460.10:FF:000002">
    <property type="entry name" value="Poly(A) polymerase alpha, putative"/>
    <property type="match status" value="1"/>
</dbReference>
<dbReference type="FunFam" id="1.10.1410.10:FF:000001">
    <property type="entry name" value="Putative poly(A) polymerase gamma"/>
    <property type="match status" value="1"/>
</dbReference>
<dbReference type="Gene3D" id="1.10.1410.10">
    <property type="match status" value="1"/>
</dbReference>
<dbReference type="Gene3D" id="3.30.460.10">
    <property type="entry name" value="Beta Polymerase, domain 2"/>
    <property type="match status" value="1"/>
</dbReference>
<dbReference type="Gene3D" id="3.30.70.590">
    <property type="entry name" value="Poly(A) polymerase predicted RNA binding domain"/>
    <property type="match status" value="1"/>
</dbReference>
<dbReference type="InterPro" id="IPR043519">
    <property type="entry name" value="NT_sf"/>
</dbReference>
<dbReference type="InterPro" id="IPR011068">
    <property type="entry name" value="NuclTrfase_I-like_C"/>
</dbReference>
<dbReference type="InterPro" id="IPR007012">
    <property type="entry name" value="PolA_pol_cen_dom"/>
</dbReference>
<dbReference type="InterPro" id="IPR048840">
    <property type="entry name" value="PolA_pol_NTPase"/>
</dbReference>
<dbReference type="InterPro" id="IPR007010">
    <property type="entry name" value="PolA_pol_RNA-bd_dom"/>
</dbReference>
<dbReference type="InterPro" id="IPR014492">
    <property type="entry name" value="PolyA_polymerase"/>
</dbReference>
<dbReference type="PANTHER" id="PTHR10682">
    <property type="entry name" value="POLY A POLYMERASE"/>
    <property type="match status" value="1"/>
</dbReference>
<dbReference type="PANTHER" id="PTHR10682:SF10">
    <property type="entry name" value="POLYNUCLEOTIDE ADENYLYLTRANSFERASE"/>
    <property type="match status" value="1"/>
</dbReference>
<dbReference type="Pfam" id="PF04928">
    <property type="entry name" value="PAP_central"/>
    <property type="match status" value="1"/>
</dbReference>
<dbReference type="Pfam" id="PF20750">
    <property type="entry name" value="PAP_NTPase"/>
    <property type="match status" value="1"/>
</dbReference>
<dbReference type="Pfam" id="PF04926">
    <property type="entry name" value="PAP_RNA-bind"/>
    <property type="match status" value="1"/>
</dbReference>
<dbReference type="PIRSF" id="PIRSF018425">
    <property type="entry name" value="PolyA_polymerase"/>
    <property type="match status" value="1"/>
</dbReference>
<dbReference type="SUPFAM" id="SSF81301">
    <property type="entry name" value="Nucleotidyltransferase"/>
    <property type="match status" value="1"/>
</dbReference>
<dbReference type="SUPFAM" id="SSF55003">
    <property type="entry name" value="PAP/Archaeal CCA-adding enzyme, C-terminal domain"/>
    <property type="match status" value="1"/>
</dbReference>
<dbReference type="SUPFAM" id="SSF81631">
    <property type="entry name" value="PAP/OAS1 substrate-binding domain"/>
    <property type="match status" value="1"/>
</dbReference>
<sequence>MTTKQWGITPPISTAPATEQENALNTALINELKNQNLFESPAESEKRVKVLDELQQITTEFVKKVSLAKHMNEKMANEAGGKIFTYGSYRLGVYGPGSDIDTLVVVPKHVSRDNFFQDLEPMLREREEVTDLAAVPDAYVPIIKFKFLGISIDLIFARLSVPRVPRDLELSDNNLLKGVEERCVLSLNGTRVTDQILQLVPNRAVFKHALRAIKFWAQRRAIYANVVGFPGGVAWAMMVARICQLYPNAVSSVIVAKFFRILHQWNWPQPILLKPIEDGPLQVRIWNPKLYPSDKAHRMPIITPAYPSMCATHNITLSTQTIILREMVRAGEIADQIMVKALPWSALFQKHDFFHRYKHYLTITAAAKTAEAQLKWAGLVESKLRHLVTRLELVDAIALAHPFNKGFDKVYNCSSEEEAQQVASGVTLEVAYESTDHEKLANDTVNEEKADNTESKADGSENGEKQIFPVYTTTCYIGLELEKKKGHPIKRLDISWPTQEFYELCKKWDKYDDTLMNVFIKNTKNTALPDEVFEPGEERPKATKKRSTADTAHSTEQLKRQKVSTA</sequence>
<organism>
    <name type="scientific">Schizosaccharomyces pombe (strain 972 / ATCC 24843)</name>
    <name type="common">Fission yeast</name>
    <dbReference type="NCBI Taxonomy" id="284812"/>
    <lineage>
        <taxon>Eukaryota</taxon>
        <taxon>Fungi</taxon>
        <taxon>Dikarya</taxon>
        <taxon>Ascomycota</taxon>
        <taxon>Taphrinomycotina</taxon>
        <taxon>Schizosaccharomycetes</taxon>
        <taxon>Schizosaccharomycetales</taxon>
        <taxon>Schizosaccharomycetaceae</taxon>
        <taxon>Schizosaccharomyces</taxon>
    </lineage>
</organism>
<name>PAP_SCHPO</name>
<protein>
    <recommendedName>
        <fullName>Poly(A) polymerase pla1</fullName>
        <shortName>PAP</shortName>
        <ecNumber evidence="4">2.7.7.19</ecNumber>
    </recommendedName>
    <alternativeName>
        <fullName>Polynucleotide adenylyltransferase</fullName>
    </alternativeName>
</protein>
<reference key="1">
    <citation type="journal article" date="1996" name="Nucleic Acids Res.">
        <title>The Schizosaccharomyces pombe pla1 gene encodes a poly(A) polymerase and can functionally replace its Saccharomyces cerevisiae homologue.</title>
        <authorList>
            <person name="Ohnacker M."/>
            <person name="Minivielle-Sebastia L."/>
            <person name="Keller W."/>
        </authorList>
    </citation>
    <scope>NUCLEOTIDE SEQUENCE [MRNA]</scope>
    <scope>FUNCTION</scope>
    <scope>CATALYTIC ACTIVITY</scope>
</reference>
<reference key="2">
    <citation type="journal article" date="2002" name="Nature">
        <title>The genome sequence of Schizosaccharomyces pombe.</title>
        <authorList>
            <person name="Wood V."/>
            <person name="Gwilliam R."/>
            <person name="Rajandream M.A."/>
            <person name="Lyne M.H."/>
            <person name="Lyne R."/>
            <person name="Stewart A."/>
            <person name="Sgouros J.G."/>
            <person name="Peat N."/>
            <person name="Hayles J."/>
            <person name="Baker S.G."/>
            <person name="Basham D."/>
            <person name="Bowman S."/>
            <person name="Brooks K."/>
            <person name="Brown D."/>
            <person name="Brown S."/>
            <person name="Chillingworth T."/>
            <person name="Churcher C.M."/>
            <person name="Collins M."/>
            <person name="Connor R."/>
            <person name="Cronin A."/>
            <person name="Davis P."/>
            <person name="Feltwell T."/>
            <person name="Fraser A."/>
            <person name="Gentles S."/>
            <person name="Goble A."/>
            <person name="Hamlin N."/>
            <person name="Harris D.E."/>
            <person name="Hidalgo J."/>
            <person name="Hodgson G."/>
            <person name="Holroyd S."/>
            <person name="Hornsby T."/>
            <person name="Howarth S."/>
            <person name="Huckle E.J."/>
            <person name="Hunt S."/>
            <person name="Jagels K."/>
            <person name="James K.D."/>
            <person name="Jones L."/>
            <person name="Jones M."/>
            <person name="Leather S."/>
            <person name="McDonald S."/>
            <person name="McLean J."/>
            <person name="Mooney P."/>
            <person name="Moule S."/>
            <person name="Mungall K.L."/>
            <person name="Murphy L.D."/>
            <person name="Niblett D."/>
            <person name="Odell C."/>
            <person name="Oliver K."/>
            <person name="O'Neil S."/>
            <person name="Pearson D."/>
            <person name="Quail M.A."/>
            <person name="Rabbinowitsch E."/>
            <person name="Rutherford K.M."/>
            <person name="Rutter S."/>
            <person name="Saunders D."/>
            <person name="Seeger K."/>
            <person name="Sharp S."/>
            <person name="Skelton J."/>
            <person name="Simmonds M.N."/>
            <person name="Squares R."/>
            <person name="Squares S."/>
            <person name="Stevens K."/>
            <person name="Taylor K."/>
            <person name="Taylor R.G."/>
            <person name="Tivey A."/>
            <person name="Walsh S.V."/>
            <person name="Warren T."/>
            <person name="Whitehead S."/>
            <person name="Woodward J.R."/>
            <person name="Volckaert G."/>
            <person name="Aert R."/>
            <person name="Robben J."/>
            <person name="Grymonprez B."/>
            <person name="Weltjens I."/>
            <person name="Vanstreels E."/>
            <person name="Rieger M."/>
            <person name="Schaefer M."/>
            <person name="Mueller-Auer S."/>
            <person name="Gabel C."/>
            <person name="Fuchs M."/>
            <person name="Duesterhoeft A."/>
            <person name="Fritzc C."/>
            <person name="Holzer E."/>
            <person name="Moestl D."/>
            <person name="Hilbert H."/>
            <person name="Borzym K."/>
            <person name="Langer I."/>
            <person name="Beck A."/>
            <person name="Lehrach H."/>
            <person name="Reinhardt R."/>
            <person name="Pohl T.M."/>
            <person name="Eger P."/>
            <person name="Zimmermann W."/>
            <person name="Wedler H."/>
            <person name="Wambutt R."/>
            <person name="Purnelle B."/>
            <person name="Goffeau A."/>
            <person name="Cadieu E."/>
            <person name="Dreano S."/>
            <person name="Gloux S."/>
            <person name="Lelaure V."/>
            <person name="Mottier S."/>
            <person name="Galibert F."/>
            <person name="Aves S.J."/>
            <person name="Xiang Z."/>
            <person name="Hunt C."/>
            <person name="Moore K."/>
            <person name="Hurst S.M."/>
            <person name="Lucas M."/>
            <person name="Rochet M."/>
            <person name="Gaillardin C."/>
            <person name="Tallada V.A."/>
            <person name="Garzon A."/>
            <person name="Thode G."/>
            <person name="Daga R.R."/>
            <person name="Cruzado L."/>
            <person name="Jimenez J."/>
            <person name="Sanchez M."/>
            <person name="del Rey F."/>
            <person name="Benito J."/>
            <person name="Dominguez A."/>
            <person name="Revuelta J.L."/>
            <person name="Moreno S."/>
            <person name="Armstrong J."/>
            <person name="Forsburg S.L."/>
            <person name="Cerutti L."/>
            <person name="Lowe T."/>
            <person name="McCombie W.R."/>
            <person name="Paulsen I."/>
            <person name="Potashkin J."/>
            <person name="Shpakovski G.V."/>
            <person name="Ussery D."/>
            <person name="Barrell B.G."/>
            <person name="Nurse P."/>
        </authorList>
    </citation>
    <scope>NUCLEOTIDE SEQUENCE [LARGE SCALE GENOMIC DNA]</scope>
    <source>
        <strain>972 / ATCC 24843</strain>
    </source>
</reference>
<reference key="3">
    <citation type="journal article" date="2000" name="Genes Cells">
        <title>Large-scale screening of intracellular protein localization in living fission yeast cells by the use of a GFP-fusion genomic DNA library.</title>
        <authorList>
            <person name="Ding D.-Q."/>
            <person name="Tomita Y."/>
            <person name="Yamamoto A."/>
            <person name="Chikashige Y."/>
            <person name="Haraguchi T."/>
            <person name="Hiraoka Y."/>
        </authorList>
    </citation>
    <scope>NUCLEOTIDE SEQUENCE [LARGE SCALE GENOMIC DNA] OF 233-436</scope>
    <scope>SUBCELLULAR LOCATION</scope>
    <source>
        <strain>ATCC 38364 / 968</strain>
    </source>
</reference>
<gene>
    <name type="primary">pla1</name>
    <name type="ORF">SPBC646.04</name>
</gene>
<keyword id="KW-0002">3D-structure</keyword>
<keyword id="KW-0067">ATP-binding</keyword>
<keyword id="KW-0460">Magnesium</keyword>
<keyword id="KW-0464">Manganese</keyword>
<keyword id="KW-0479">Metal-binding</keyword>
<keyword id="KW-0507">mRNA processing</keyword>
<keyword id="KW-0547">Nucleotide-binding</keyword>
<keyword id="KW-0539">Nucleus</keyword>
<keyword id="KW-1185">Reference proteome</keyword>
<keyword id="KW-0694">RNA-binding</keyword>
<keyword id="KW-0808">Transferase</keyword>
<comment type="function">
    <text evidence="4">Polymerase that creates the 3'-poly(A) tail of mRNA's. May acquire specificity through interaction with a cleavage and polyadenylation factor (CF I).</text>
</comment>
<comment type="catalytic activity">
    <reaction evidence="4">
        <text>RNA(n) + ATP = RNA(n)-3'-adenine ribonucleotide + diphosphate</text>
        <dbReference type="Rhea" id="RHEA:11332"/>
        <dbReference type="Rhea" id="RHEA-COMP:14527"/>
        <dbReference type="Rhea" id="RHEA-COMP:17347"/>
        <dbReference type="ChEBI" id="CHEBI:30616"/>
        <dbReference type="ChEBI" id="CHEBI:33019"/>
        <dbReference type="ChEBI" id="CHEBI:140395"/>
        <dbReference type="ChEBI" id="CHEBI:173115"/>
        <dbReference type="EC" id="2.7.7.19"/>
    </reaction>
    <physiologicalReaction direction="left-to-right" evidence="6">
        <dbReference type="Rhea" id="RHEA:11333"/>
    </physiologicalReaction>
</comment>
<comment type="cofactor">
    <cofactor evidence="1">
        <name>Mg(2+)</name>
        <dbReference type="ChEBI" id="CHEBI:18420"/>
    </cofactor>
    <cofactor evidence="1">
        <name>Mn(2+)</name>
        <dbReference type="ChEBI" id="CHEBI:29035"/>
    </cofactor>
    <text evidence="1">Binds 2 magnesium ions. Also active with manganese.</text>
</comment>
<comment type="interaction">
    <interactant intactId="EBI-7997221">
        <id>Q10295</id>
    </interactant>
    <interactant intactId="EBI-7997069">
        <id>O74958</id>
        <label>mmi1</label>
    </interactant>
    <organismsDiffer>false</organismsDiffer>
    <experiments>3</experiments>
</comment>
<comment type="interaction">
    <interactant intactId="EBI-7997221">
        <id>Q10295</id>
    </interactant>
    <interactant intactId="EBI-1117407">
        <id>Q9UTR8</id>
        <label>red1</label>
    </interactant>
    <organismsDiffer>false</organismsDiffer>
    <experiments>3</experiments>
</comment>
<comment type="interaction">
    <interactant intactId="EBI-7997221">
        <id>Q10295</id>
    </interactant>
    <interactant intactId="EBI-8993901">
        <id>O13799</id>
        <label>SPAC17H9.02</label>
    </interactant>
    <organismsDiffer>false</organismsDiffer>
    <experiments>2</experiments>
</comment>
<comment type="subcellular location">
    <subcellularLocation>
        <location evidence="3">Nucleus</location>
    </subcellularLocation>
</comment>
<comment type="similarity">
    <text evidence="5">Belongs to the poly(A) polymerase family.</text>
</comment>